<sequence>MSPMPALIEEGRAKVNLSLRVVGRRADGYHDLESVVAFADCADRLTLEPGGELKLATTGPLAAACGDTADNLVFKAAKLLAEAVPNLKLGAFALDKVLPVAAGIGGGSADAAAALRLLARLNNLSLDDPRLQKVALATGADVPVCLYSRACDMTGVGEQLLPLALPSMPCVMVNPRVPVATKDVFQALGLRNGELLVGATSVIGAPAWPEEGASIADWVEVLETVANDLEAPAMRIEPVIGEVLEALRDSAGVKLARMSGSGATCFAIYGAPAEAHAAAEKIRRDHPGWWVHAGTLS</sequence>
<keyword id="KW-0067">ATP-binding</keyword>
<keyword id="KW-0414">Isoprene biosynthesis</keyword>
<keyword id="KW-0418">Kinase</keyword>
<keyword id="KW-0547">Nucleotide-binding</keyword>
<keyword id="KW-1185">Reference proteome</keyword>
<keyword id="KW-0808">Transferase</keyword>
<feature type="chain" id="PRO_0000189194" description="4-diphosphocytidyl-2-C-methyl-D-erythritol kinase">
    <location>
        <begin position="1"/>
        <end position="297"/>
    </location>
</feature>
<feature type="active site" evidence="1">
    <location>
        <position position="14"/>
    </location>
</feature>
<feature type="active site" evidence="1">
    <location>
        <position position="141"/>
    </location>
</feature>
<feature type="binding site" evidence="1">
    <location>
        <begin position="99"/>
        <end position="109"/>
    </location>
    <ligand>
        <name>ATP</name>
        <dbReference type="ChEBI" id="CHEBI:30616"/>
    </ligand>
</feature>
<comment type="function">
    <text evidence="1">Catalyzes the phosphorylation of the position 2 hydroxy group of 4-diphosphocytidyl-2C-methyl-D-erythritol.</text>
</comment>
<comment type="catalytic activity">
    <reaction evidence="1">
        <text>4-CDP-2-C-methyl-D-erythritol + ATP = 4-CDP-2-C-methyl-D-erythritol 2-phosphate + ADP + H(+)</text>
        <dbReference type="Rhea" id="RHEA:18437"/>
        <dbReference type="ChEBI" id="CHEBI:15378"/>
        <dbReference type="ChEBI" id="CHEBI:30616"/>
        <dbReference type="ChEBI" id="CHEBI:57823"/>
        <dbReference type="ChEBI" id="CHEBI:57919"/>
        <dbReference type="ChEBI" id="CHEBI:456216"/>
        <dbReference type="EC" id="2.7.1.148"/>
    </reaction>
</comment>
<comment type="pathway">
    <text evidence="1">Isoprenoid biosynthesis; isopentenyl diphosphate biosynthesis via DXP pathway; isopentenyl diphosphate from 1-deoxy-D-xylulose 5-phosphate: step 3/6.</text>
</comment>
<comment type="similarity">
    <text evidence="1">Belongs to the GHMP kinase family. IspE subfamily.</text>
</comment>
<name>ISPE_BRADU</name>
<reference key="1">
    <citation type="journal article" date="2002" name="DNA Res.">
        <title>Complete genomic sequence of nitrogen-fixing symbiotic bacterium Bradyrhizobium japonicum USDA110.</title>
        <authorList>
            <person name="Kaneko T."/>
            <person name="Nakamura Y."/>
            <person name="Sato S."/>
            <person name="Minamisawa K."/>
            <person name="Uchiumi T."/>
            <person name="Sasamoto S."/>
            <person name="Watanabe A."/>
            <person name="Idesawa K."/>
            <person name="Iriguchi M."/>
            <person name="Kawashima K."/>
            <person name="Kohara M."/>
            <person name="Matsumoto M."/>
            <person name="Shimpo S."/>
            <person name="Tsuruoka H."/>
            <person name="Wada T."/>
            <person name="Yamada M."/>
            <person name="Tabata S."/>
        </authorList>
    </citation>
    <scope>NUCLEOTIDE SEQUENCE [LARGE SCALE GENOMIC DNA]</scope>
    <source>
        <strain>JCM 10833 / BCRC 13528 / IAM 13628 / NBRC 14792 / USDA 110</strain>
    </source>
</reference>
<accession>Q89S79</accession>
<dbReference type="EC" id="2.7.1.148" evidence="1"/>
<dbReference type="EMBL" id="BA000040">
    <property type="protein sequence ID" value="BAC47791.1"/>
    <property type="molecule type" value="Genomic_DNA"/>
</dbReference>
<dbReference type="RefSeq" id="NP_769166.1">
    <property type="nucleotide sequence ID" value="NC_004463.1"/>
</dbReference>
<dbReference type="SMR" id="Q89S79"/>
<dbReference type="FunCoup" id="Q89S79">
    <property type="interactions" value="314"/>
</dbReference>
<dbReference type="STRING" id="224911.AAV28_09565"/>
<dbReference type="EnsemblBacteria" id="BAC47791">
    <property type="protein sequence ID" value="BAC47791"/>
    <property type="gene ID" value="BAC47791"/>
</dbReference>
<dbReference type="KEGG" id="bja:blr2526"/>
<dbReference type="PATRIC" id="fig|224911.5.peg.2484"/>
<dbReference type="eggNOG" id="COG1947">
    <property type="taxonomic scope" value="Bacteria"/>
</dbReference>
<dbReference type="HOGENOM" id="CLU_053057_1_0_5"/>
<dbReference type="InParanoid" id="Q89S79"/>
<dbReference type="OrthoDB" id="9809438at2"/>
<dbReference type="PhylomeDB" id="Q89S79"/>
<dbReference type="UniPathway" id="UPA00056">
    <property type="reaction ID" value="UER00094"/>
</dbReference>
<dbReference type="Proteomes" id="UP000002526">
    <property type="component" value="Chromosome"/>
</dbReference>
<dbReference type="GO" id="GO:0050515">
    <property type="term" value="F:4-(cytidine 5'-diphospho)-2-C-methyl-D-erythritol kinase activity"/>
    <property type="evidence" value="ECO:0000318"/>
    <property type="project" value="GO_Central"/>
</dbReference>
<dbReference type="GO" id="GO:0005524">
    <property type="term" value="F:ATP binding"/>
    <property type="evidence" value="ECO:0007669"/>
    <property type="project" value="UniProtKB-UniRule"/>
</dbReference>
<dbReference type="GO" id="GO:0019288">
    <property type="term" value="P:isopentenyl diphosphate biosynthetic process, methylerythritol 4-phosphate pathway"/>
    <property type="evidence" value="ECO:0007669"/>
    <property type="project" value="UniProtKB-UniRule"/>
</dbReference>
<dbReference type="GO" id="GO:0016114">
    <property type="term" value="P:terpenoid biosynthetic process"/>
    <property type="evidence" value="ECO:0007669"/>
    <property type="project" value="InterPro"/>
</dbReference>
<dbReference type="Gene3D" id="3.30.230.10">
    <property type="match status" value="1"/>
</dbReference>
<dbReference type="Gene3D" id="3.30.70.890">
    <property type="entry name" value="GHMP kinase, C-terminal domain"/>
    <property type="match status" value="1"/>
</dbReference>
<dbReference type="HAMAP" id="MF_00061">
    <property type="entry name" value="IspE"/>
    <property type="match status" value="1"/>
</dbReference>
<dbReference type="InterPro" id="IPR013750">
    <property type="entry name" value="GHMP_kinase_C_dom"/>
</dbReference>
<dbReference type="InterPro" id="IPR036554">
    <property type="entry name" value="GHMP_kinase_C_sf"/>
</dbReference>
<dbReference type="InterPro" id="IPR006204">
    <property type="entry name" value="GHMP_kinase_N_dom"/>
</dbReference>
<dbReference type="InterPro" id="IPR004424">
    <property type="entry name" value="IspE"/>
</dbReference>
<dbReference type="InterPro" id="IPR020568">
    <property type="entry name" value="Ribosomal_Su5_D2-typ_SF"/>
</dbReference>
<dbReference type="InterPro" id="IPR014721">
    <property type="entry name" value="Ribsml_uS5_D2-typ_fold_subgr"/>
</dbReference>
<dbReference type="NCBIfam" id="TIGR00154">
    <property type="entry name" value="ispE"/>
    <property type="match status" value="1"/>
</dbReference>
<dbReference type="NCBIfam" id="NF011202">
    <property type="entry name" value="PRK14608.1"/>
    <property type="match status" value="1"/>
</dbReference>
<dbReference type="PANTHER" id="PTHR43527">
    <property type="entry name" value="4-DIPHOSPHOCYTIDYL-2-C-METHYL-D-ERYTHRITOL KINASE, CHLOROPLASTIC"/>
    <property type="match status" value="1"/>
</dbReference>
<dbReference type="PANTHER" id="PTHR43527:SF2">
    <property type="entry name" value="4-DIPHOSPHOCYTIDYL-2-C-METHYL-D-ERYTHRITOL KINASE, CHLOROPLASTIC"/>
    <property type="match status" value="1"/>
</dbReference>
<dbReference type="Pfam" id="PF08544">
    <property type="entry name" value="GHMP_kinases_C"/>
    <property type="match status" value="1"/>
</dbReference>
<dbReference type="Pfam" id="PF00288">
    <property type="entry name" value="GHMP_kinases_N"/>
    <property type="match status" value="1"/>
</dbReference>
<dbReference type="PIRSF" id="PIRSF010376">
    <property type="entry name" value="IspE"/>
    <property type="match status" value="1"/>
</dbReference>
<dbReference type="SUPFAM" id="SSF55060">
    <property type="entry name" value="GHMP Kinase, C-terminal domain"/>
    <property type="match status" value="1"/>
</dbReference>
<dbReference type="SUPFAM" id="SSF54211">
    <property type="entry name" value="Ribosomal protein S5 domain 2-like"/>
    <property type="match status" value="1"/>
</dbReference>
<organism>
    <name type="scientific">Bradyrhizobium diazoefficiens (strain JCM 10833 / BCRC 13528 / IAM 13628 / NBRC 14792 / USDA 110)</name>
    <dbReference type="NCBI Taxonomy" id="224911"/>
    <lineage>
        <taxon>Bacteria</taxon>
        <taxon>Pseudomonadati</taxon>
        <taxon>Pseudomonadota</taxon>
        <taxon>Alphaproteobacteria</taxon>
        <taxon>Hyphomicrobiales</taxon>
        <taxon>Nitrobacteraceae</taxon>
        <taxon>Bradyrhizobium</taxon>
    </lineage>
</organism>
<gene>
    <name evidence="1" type="primary">ispE</name>
    <name type="synonym">ipk</name>
    <name type="ordered locus">blr2526</name>
</gene>
<proteinExistence type="inferred from homology"/>
<evidence type="ECO:0000255" key="1">
    <source>
        <dbReference type="HAMAP-Rule" id="MF_00061"/>
    </source>
</evidence>
<protein>
    <recommendedName>
        <fullName evidence="1">4-diphosphocytidyl-2-C-methyl-D-erythritol kinase</fullName>
        <shortName evidence="1">CMK</shortName>
        <ecNumber evidence="1">2.7.1.148</ecNumber>
    </recommendedName>
    <alternativeName>
        <fullName evidence="1">4-(cytidine-5'-diphospho)-2-C-methyl-D-erythritol kinase</fullName>
    </alternativeName>
</protein>